<organism>
    <name type="scientific">Bacillus phage phi15</name>
    <name type="common">Bacteriophage phi-15</name>
    <dbReference type="NCBI Taxonomy" id="10755"/>
    <lineage>
        <taxon>Viruses</taxon>
        <taxon>Duplodnaviria</taxon>
        <taxon>Heunggongvirae</taxon>
        <taxon>Uroviricota</taxon>
        <taxon>Caudoviricetes</taxon>
        <taxon>Salasmaviridae</taxon>
        <taxon>Picovirinae</taxon>
        <taxon>Salasvirus</taxon>
        <taxon>Salasvirus phi29</taxon>
    </lineage>
</organism>
<feature type="chain" id="PRO_0000106620" description="Gene product 16.9">
    <location>
        <begin position="1"/>
        <end position="108"/>
    </location>
</feature>
<keyword id="KW-0244">Early protein</keyword>
<protein>
    <recommendedName>
        <fullName>Gene product 16.9</fullName>
        <shortName>gp16.9</shortName>
    </recommendedName>
    <alternativeName>
        <fullName>Protein p16.9</fullName>
    </alternativeName>
</protein>
<name>GP169_BPPH5</name>
<gene>
    <name type="primary">16.9</name>
</gene>
<evidence type="ECO:0000305" key="1"/>
<sequence>MSVQLNAFTFILERRGWRMVCYEQLTTNGTRILHFYLKDNPTFFATYSSQFLSDTKMIRRFASWSGQLLEGSNSVFWTNITPFEPIDEETAEDIKNLDKVVEGMNFTL</sequence>
<proteinExistence type="inferred from homology"/>
<organismHost>
    <name type="scientific">Bacillus subtilis</name>
    <dbReference type="NCBI Taxonomy" id="1423"/>
</organismHost>
<reference key="1">
    <citation type="journal article" date="1989" name="Gene">
        <title>Nucleotide sequence of the right early region of Bacillus phage phi 15 and comparison with related phages: reorganization of gene 17 during evolution.</title>
        <authorList>
            <person name="Benes V."/>
            <person name="Arnold L."/>
            <person name="Smrt J."/>
            <person name="Paces V."/>
        </authorList>
    </citation>
    <scope>NUCLEOTIDE SEQUENCE [GENOMIC DNA]</scope>
</reference>
<accession>P68937</accession>
<accession>P08388</accession>
<comment type="similarity">
    <text evidence="1">Belongs to the phi29likevirus gp16.9 family.</text>
</comment>
<dbReference type="EMBL" id="M28830">
    <property type="protein sequence ID" value="AAA32330.1"/>
    <property type="molecule type" value="Genomic_DNA"/>
</dbReference>
<dbReference type="PIR" id="JS0193">
    <property type="entry name" value="WRBP13"/>
</dbReference>